<comment type="developmental stage">
    <text>Expression correlates with egg production.</text>
</comment>
<proteinExistence type="evidence at transcript level"/>
<keyword id="KW-1185">Reference proteome</keyword>
<keyword id="KW-0677">Repeat</keyword>
<keyword id="KW-0732">Signal</keyword>
<sequence length="177" mass="16336">MKQSLTLVFLVAIGYATAYTTSHDYSGGYGGGCYGSDCDSGYGDSGYGGGCTGGDCGGGYGGGYGGGCSGGDCGNYGGGYGGDCNGGDCGNYGGGYGGGNGGGCSGGNCGGGFDEAFPAPYGGDYGNGGNGFGKGGSKGNNYGKGYGGGSGKGKGGGKGGKGGKGGTYKPSHYGGGY</sequence>
<feature type="signal peptide">
    <location>
        <begin position="1"/>
        <end position="18"/>
    </location>
</feature>
<feature type="chain" id="PRO_0000021154" description="Eggshell protein">
    <location>
        <begin position="19"/>
        <end position="177"/>
    </location>
</feature>
<feature type="repeat" description="1">
    <location>
        <begin position="25"/>
        <end position="41"/>
    </location>
</feature>
<feature type="repeat" description="2">
    <location>
        <begin position="42"/>
        <end position="59"/>
    </location>
</feature>
<feature type="repeat" description="3">
    <location>
        <begin position="60"/>
        <end position="75"/>
    </location>
</feature>
<feature type="repeat" description="4">
    <location>
        <begin position="76"/>
        <end position="91"/>
    </location>
</feature>
<feature type="repeat" description="5">
    <location>
        <begin position="92"/>
        <end position="112"/>
    </location>
</feature>
<feature type="region of interest" description="5 X approximate tandem repeats">
    <location>
        <begin position="25"/>
        <end position="112"/>
    </location>
</feature>
<feature type="region of interest" description="Disordered" evidence="1">
    <location>
        <begin position="149"/>
        <end position="177"/>
    </location>
</feature>
<feature type="compositionally biased region" description="Gly residues" evidence="1">
    <location>
        <begin position="149"/>
        <end position="166"/>
    </location>
</feature>
<protein>
    <recommendedName>
        <fullName>Eggshell protein</fullName>
    </recommendedName>
    <alternativeName>
        <fullName>Chorion protein</fullName>
    </alternativeName>
</protein>
<organism>
    <name type="scientific">Schistosoma mansoni</name>
    <name type="common">Blood fluke</name>
    <dbReference type="NCBI Taxonomy" id="6183"/>
    <lineage>
        <taxon>Eukaryota</taxon>
        <taxon>Metazoa</taxon>
        <taxon>Spiralia</taxon>
        <taxon>Lophotrochozoa</taxon>
        <taxon>Platyhelminthes</taxon>
        <taxon>Trematoda</taxon>
        <taxon>Digenea</taxon>
        <taxon>Strigeidida</taxon>
        <taxon>Schistosomatoidea</taxon>
        <taxon>Schistosomatidae</taxon>
        <taxon>Schistosoma</taxon>
    </lineage>
</organism>
<evidence type="ECO:0000256" key="1">
    <source>
        <dbReference type="SAM" id="MobiDB-lite"/>
    </source>
</evidence>
<reference key="1">
    <citation type="journal article" date="1989" name="Mol. Biochem. Parasitol.">
        <title>Predicted structure of a major Schistosoma mansoni eggshell protein.</title>
        <authorList>
            <person name="Rodrigues V."/>
            <person name="Chaudhri M."/>
            <person name="Knight M."/>
            <person name="Meadows H.M."/>
            <person name="Chambers A.E."/>
            <person name="Taylor W.R."/>
            <person name="Kelly C."/>
            <person name="Simpson A.J.G."/>
        </authorList>
    </citation>
    <scope>NUCLEOTIDE SEQUENCE [GENOMIC DNA]</scope>
    <source>
        <strain>Puerto Rican</strain>
    </source>
</reference>
<reference key="2">
    <citation type="submission" date="1988-07" db="EMBL/GenBank/DDBJ databases">
        <authorList>
            <person name="Meadows H.M."/>
        </authorList>
    </citation>
    <scope>SEQUENCE REVISION TO 18</scope>
</reference>
<gene>
    <name type="primary">F10</name>
</gene>
<name>EGG3_SCHMA</name>
<accession>P13396</accession>
<dbReference type="EMBL" id="J03982">
    <property type="protein sequence ID" value="AAA29870.1"/>
    <property type="molecule type" value="Genomic_DNA"/>
</dbReference>
<dbReference type="InParanoid" id="P13396"/>
<dbReference type="Proteomes" id="UP000008854">
    <property type="component" value="Unassembled WGS sequence"/>
</dbReference>
<dbReference type="PRINTS" id="PR01228">
    <property type="entry name" value="EGGSHELL"/>
</dbReference>